<protein>
    <recommendedName>
        <fullName evidence="3">Iron ABC transporter substrate-binding lipoprotein MtsA</fullName>
    </recommendedName>
</protein>
<evidence type="ECO:0000250" key="1">
    <source>
        <dbReference type="UniProtKB" id="P0A4G4"/>
    </source>
</evidence>
<evidence type="ECO:0000255" key="2">
    <source>
        <dbReference type="PROSITE-ProRule" id="PRU00303"/>
    </source>
</evidence>
<evidence type="ECO:0000305" key="3"/>
<feature type="signal peptide" evidence="2">
    <location>
        <begin position="1"/>
        <end position="20"/>
    </location>
</feature>
<feature type="chain" id="PRO_0000031895" description="Iron ABC transporter substrate-binding lipoprotein MtsA">
    <location>
        <begin position="21"/>
        <end position="310"/>
    </location>
</feature>
<feature type="binding site" evidence="1">
    <location>
        <position position="68"/>
    </location>
    <ligand>
        <name>Fe(2+)</name>
        <dbReference type="ChEBI" id="CHEBI:29033"/>
    </ligand>
</feature>
<feature type="binding site" evidence="1">
    <location>
        <position position="140"/>
    </location>
    <ligand>
        <name>Fe(2+)</name>
        <dbReference type="ChEBI" id="CHEBI:29033"/>
    </ligand>
</feature>
<feature type="binding site" evidence="1">
    <location>
        <position position="206"/>
    </location>
    <ligand>
        <name>Fe(2+)</name>
        <dbReference type="ChEBI" id="CHEBI:29033"/>
    </ligand>
</feature>
<feature type="binding site" evidence="1">
    <location>
        <position position="281"/>
    </location>
    <ligand>
        <name>Fe(2+)</name>
        <dbReference type="ChEBI" id="CHEBI:29033"/>
    </ligand>
</feature>
<feature type="lipid moiety-binding region" description="N-palmitoyl cysteine" evidence="2">
    <location>
        <position position="21"/>
    </location>
</feature>
<feature type="lipid moiety-binding region" description="S-diacylglycerol cysteine" evidence="2">
    <location>
        <position position="21"/>
    </location>
</feature>
<dbReference type="EMBL" id="AE014074">
    <property type="protein sequence ID" value="AAM78925.1"/>
    <property type="status" value="ALT_INIT"/>
    <property type="molecule type" value="Genomic_DNA"/>
</dbReference>
<dbReference type="RefSeq" id="WP_004218965.1">
    <property type="nucleotide sequence ID" value="NC_004070.1"/>
</dbReference>
<dbReference type="SMR" id="P0DF60"/>
<dbReference type="KEGG" id="spg:SpyM3_0318"/>
<dbReference type="HOGENOM" id="CLU_016838_1_1_9"/>
<dbReference type="Proteomes" id="UP000000564">
    <property type="component" value="Chromosome"/>
</dbReference>
<dbReference type="GO" id="GO:0005886">
    <property type="term" value="C:plasma membrane"/>
    <property type="evidence" value="ECO:0007669"/>
    <property type="project" value="UniProtKB-SubCell"/>
</dbReference>
<dbReference type="GO" id="GO:0046872">
    <property type="term" value="F:metal ion binding"/>
    <property type="evidence" value="ECO:0007669"/>
    <property type="project" value="UniProtKB-KW"/>
</dbReference>
<dbReference type="GO" id="GO:0007155">
    <property type="term" value="P:cell adhesion"/>
    <property type="evidence" value="ECO:0007669"/>
    <property type="project" value="InterPro"/>
</dbReference>
<dbReference type="GO" id="GO:0006826">
    <property type="term" value="P:iron ion transport"/>
    <property type="evidence" value="ECO:0007669"/>
    <property type="project" value="UniProtKB-KW"/>
</dbReference>
<dbReference type="CDD" id="cd01137">
    <property type="entry name" value="PsaA"/>
    <property type="match status" value="1"/>
</dbReference>
<dbReference type="Gene3D" id="3.40.50.1980">
    <property type="entry name" value="Nitrogenase molybdenum iron protein domain"/>
    <property type="match status" value="2"/>
</dbReference>
<dbReference type="InterPro" id="IPR006129">
    <property type="entry name" value="AdhesinB"/>
</dbReference>
<dbReference type="InterPro" id="IPR050492">
    <property type="entry name" value="Bact_metal-bind_prot9"/>
</dbReference>
<dbReference type="InterPro" id="IPR006128">
    <property type="entry name" value="Lipoprotein_PsaA-like"/>
</dbReference>
<dbReference type="InterPro" id="IPR006127">
    <property type="entry name" value="ZnuA-like"/>
</dbReference>
<dbReference type="NCBIfam" id="NF040928">
    <property type="entry name" value="ABC_lipo_SloC"/>
    <property type="match status" value="1"/>
</dbReference>
<dbReference type="PANTHER" id="PTHR42953">
    <property type="entry name" value="HIGH-AFFINITY ZINC UPTAKE SYSTEM PROTEIN ZNUA-RELATED"/>
    <property type="match status" value="1"/>
</dbReference>
<dbReference type="PANTHER" id="PTHR42953:SF1">
    <property type="entry name" value="METAL-BINDING PROTEIN HI_0362-RELATED"/>
    <property type="match status" value="1"/>
</dbReference>
<dbReference type="Pfam" id="PF01297">
    <property type="entry name" value="ZnuA"/>
    <property type="match status" value="1"/>
</dbReference>
<dbReference type="PRINTS" id="PR00691">
    <property type="entry name" value="ADHESINB"/>
</dbReference>
<dbReference type="PRINTS" id="PR00690">
    <property type="entry name" value="ADHESNFAMILY"/>
</dbReference>
<dbReference type="SUPFAM" id="SSF53807">
    <property type="entry name" value="Helical backbone' metal receptor"/>
    <property type="match status" value="1"/>
</dbReference>
<dbReference type="PROSITE" id="PS51257">
    <property type="entry name" value="PROKAR_LIPOPROTEIN"/>
    <property type="match status" value="1"/>
</dbReference>
<keyword id="KW-1003">Cell membrane</keyword>
<keyword id="KW-0406">Ion transport</keyword>
<keyword id="KW-0408">Iron</keyword>
<keyword id="KW-0410">Iron transport</keyword>
<keyword id="KW-0449">Lipoprotein</keyword>
<keyword id="KW-0472">Membrane</keyword>
<keyword id="KW-0479">Metal-binding</keyword>
<keyword id="KW-0564">Palmitate</keyword>
<keyword id="KW-0732">Signal</keyword>
<keyword id="KW-0813">Transport</keyword>
<name>MTSA_STRP3</name>
<comment type="function">
    <text evidence="1">Part of the ATP-binding cassette (ABC) transport system MtsABC involved in iron import. Binds iron with high affinity and specificity and delivers it to the membrane permease for translocation into the cytoplasm. Has low affinity for Zn(2+) and Cu(2+).</text>
</comment>
<comment type="subcellular location">
    <subcellularLocation>
        <location evidence="2">Cell membrane</location>
        <topology evidence="2">Lipid-anchor</topology>
    </subcellularLocation>
</comment>
<comment type="similarity">
    <text evidence="3">Belongs to the bacterial solute-binding protein 9 family. Lipoprotein receptor antigen (Lrai) subfamily.</text>
</comment>
<comment type="sequence caution" evidence="3">
    <conflict type="erroneous initiation">
        <sequence resource="EMBL-CDS" id="AAM78925"/>
    </conflict>
</comment>
<reference key="1">
    <citation type="journal article" date="2002" name="Proc. Natl. Acad. Sci. U.S.A.">
        <title>Genome sequence of a serotype M3 strain of group A Streptococcus: phage-encoded toxins, the high-virulence phenotype, and clone emergence.</title>
        <authorList>
            <person name="Beres S.B."/>
            <person name="Sylva G.L."/>
            <person name="Barbian K.D."/>
            <person name="Lei B."/>
            <person name="Hoff J.S."/>
            <person name="Mammarella N.D."/>
            <person name="Liu M.-Y."/>
            <person name="Smoot J.C."/>
            <person name="Porcella S.F."/>
            <person name="Parkins L.D."/>
            <person name="Campbell D.S."/>
            <person name="Smith T.M."/>
            <person name="McCormick J.K."/>
            <person name="Leung D.Y.M."/>
            <person name="Schlievert P.M."/>
            <person name="Musser J.M."/>
        </authorList>
    </citation>
    <scope>NUCLEOTIDE SEQUENCE [LARGE SCALE GENOMIC DNA]</scope>
    <source>
        <strain>ATCC BAA-595 / MGAS315</strain>
    </source>
</reference>
<gene>
    <name type="primary">mtsA</name>
    <name type="ordered locus">SpyM3_0318</name>
</gene>
<accession>P0DF60</accession>
<accession>P0A4G5</accession>
<accession>Q9A157</accession>
<accession>Q9RNI7</accession>
<accession>Q9RNJ0</accession>
<sequence>MGKRMSLILGAFLSVFLLVACSSTGTKTAKSDKLKVVATNSIIADMTKAIAGDKIDLHSIVPIGQDPHEYEPLPEDVEKTSNADVIFYNGINLEDGGQAWFTKLVKNAQKTKNKDYFAVSDGIDVIYLEGASEKGKEDPHAWLNLENGIIYSKNIAKQLIAKDPKNKETYEKNLKAYVAKLEKLDKEAKSKFDAIAENKKLIVTSEGCFKYFSKAYGVPSAYIWEINTEEEGTPDQISSLIEKLKVIKPSALFVESSVDRRPMETVSKDSGIPIYSEIFTDSIAKKGKPGDSYYAMMKWNLDKISEGLAK</sequence>
<proteinExistence type="inferred from homology"/>
<organism>
    <name type="scientific">Streptococcus pyogenes serotype M3 (strain ATCC BAA-595 / MGAS315)</name>
    <dbReference type="NCBI Taxonomy" id="198466"/>
    <lineage>
        <taxon>Bacteria</taxon>
        <taxon>Bacillati</taxon>
        <taxon>Bacillota</taxon>
        <taxon>Bacilli</taxon>
        <taxon>Lactobacillales</taxon>
        <taxon>Streptococcaceae</taxon>
        <taxon>Streptococcus</taxon>
    </lineage>
</organism>